<proteinExistence type="inferred from homology"/>
<keyword id="KW-0012">Acyltransferase</keyword>
<keyword id="KW-0125">Carotenoid biosynthesis</keyword>
<keyword id="KW-1003">Cell membrane</keyword>
<keyword id="KW-0472">Membrane</keyword>
<keyword id="KW-0732">Signal</keyword>
<keyword id="KW-0808">Transferase</keyword>
<keyword id="KW-0812">Transmembrane</keyword>
<keyword id="KW-1133">Transmembrane helix</keyword>
<protein>
    <recommendedName>
        <fullName>Glycosyl-4,4'-diaponeurosporenoate acyltransferase</fullName>
        <ecNumber>2.3.1.-</ecNumber>
    </recommendedName>
</protein>
<organism>
    <name type="scientific">Staphylococcus aureus (strain Newman)</name>
    <dbReference type="NCBI Taxonomy" id="426430"/>
    <lineage>
        <taxon>Bacteria</taxon>
        <taxon>Bacillati</taxon>
        <taxon>Bacillota</taxon>
        <taxon>Bacilli</taxon>
        <taxon>Bacillales</taxon>
        <taxon>Staphylococcaceae</taxon>
        <taxon>Staphylococcus</taxon>
    </lineage>
</organism>
<gene>
    <name type="primary">crtO</name>
    <name type="ordered locus">NWMN_2465</name>
</gene>
<evidence type="ECO:0000255" key="1"/>
<evidence type="ECO:0000269" key="2">
    <source>
    </source>
</evidence>
<evidence type="ECO:0000305" key="3"/>
<comment type="function">
    <text evidence="2">Catalyzes the acylation of glycosyl-4,4'-diaponeurosporenoate, i.e. the esterification of glucose at the C6'' position with the carboxyl group of the C(15) fatty acid 12-methyltetradecanoic acid, to yield staphyloxanthin. This is the last step in the biosynthesis of this orange pigment, present in most staphylococci strains.</text>
</comment>
<comment type="pathway">
    <text evidence="2">Carotenoid biosynthesis; staphyloxanthin biosynthesis; staphyloxanthin from farnesyl diphosphate: step 5/5.</text>
</comment>
<comment type="subcellular location">
    <subcellularLocation>
        <location evidence="3">Cell membrane</location>
        <topology evidence="3">Single-pass membrane protein</topology>
    </subcellularLocation>
</comment>
<comment type="similarity">
    <text evidence="3">Belongs to the acyltransferase CrtO family.</text>
</comment>
<name>CRTO_STAAE</name>
<dbReference type="EC" id="2.3.1.-"/>
<dbReference type="EMBL" id="X97985">
    <property type="protein sequence ID" value="CAA66625.1"/>
    <property type="molecule type" value="Genomic_DNA"/>
</dbReference>
<dbReference type="EMBL" id="AP009351">
    <property type="protein sequence ID" value="BAF68737.1"/>
    <property type="molecule type" value="Genomic_DNA"/>
</dbReference>
<dbReference type="KEGG" id="sae:NWMN_2465"/>
<dbReference type="HOGENOM" id="CLU_133300_0_0_9"/>
<dbReference type="BRENDA" id="2.3.1.B26">
    <property type="organism ID" value="3352"/>
</dbReference>
<dbReference type="UniPathway" id="UPA00029">
    <property type="reaction ID" value="UER00560"/>
</dbReference>
<dbReference type="Proteomes" id="UP000006386">
    <property type="component" value="Chromosome"/>
</dbReference>
<dbReference type="GO" id="GO:0005886">
    <property type="term" value="C:plasma membrane"/>
    <property type="evidence" value="ECO:0007669"/>
    <property type="project" value="UniProtKB-SubCell"/>
</dbReference>
<dbReference type="GO" id="GO:0016746">
    <property type="term" value="F:acyltransferase activity"/>
    <property type="evidence" value="ECO:0007669"/>
    <property type="project" value="UniProtKB-KW"/>
</dbReference>
<dbReference type="GO" id="GO:0016117">
    <property type="term" value="P:carotenoid biosynthetic process"/>
    <property type="evidence" value="ECO:0007669"/>
    <property type="project" value="UniProtKB-KW"/>
</dbReference>
<dbReference type="InterPro" id="IPR044021">
    <property type="entry name" value="CrtO"/>
</dbReference>
<dbReference type="Pfam" id="PF18927">
    <property type="entry name" value="CrtO"/>
    <property type="match status" value="1"/>
</dbReference>
<accession>Q53588</accession>
<accession>A6QK55</accession>
<feature type="signal peptide" evidence="1">
    <location>
        <begin position="1"/>
        <end position="28"/>
    </location>
</feature>
<feature type="chain" id="PRO_0000284846" description="Glycosyl-4,4'-diaponeurosporenoate acyltransferase">
    <location>
        <begin position="29"/>
        <end position="165"/>
    </location>
</feature>
<feature type="transmembrane region" description="Helical" evidence="1">
    <location>
        <begin position="126"/>
        <end position="145"/>
    </location>
</feature>
<feature type="sequence conflict" description="In Ref. 1; CAA66625." evidence="3" ref="1">
    <original>N</original>
    <variation>K</variation>
    <location>
        <position position="48"/>
    </location>
</feature>
<reference key="1">
    <citation type="journal article" date="2005" name="J. Biol. Chem.">
        <title>Structure and biosynthesis of staphyloxanthin from Staphylococcus aureus.</title>
        <authorList>
            <person name="Pelz A."/>
            <person name="Wieland K.-P."/>
            <person name="Putzbach K."/>
            <person name="Hentschel P."/>
            <person name="Albert K."/>
            <person name="Goetz F."/>
        </authorList>
    </citation>
    <scope>NUCLEOTIDE SEQUENCE [GENOMIC DNA]</scope>
    <scope>FUNCTION</scope>
    <scope>PATHWAY</scope>
</reference>
<reference key="2">
    <citation type="journal article" date="2008" name="J. Bacteriol.">
        <title>Genome sequence of Staphylococcus aureus strain Newman and comparative analysis of staphylococcal genomes: polymorphism and evolution of two major pathogenicity islands.</title>
        <authorList>
            <person name="Baba T."/>
            <person name="Bae T."/>
            <person name="Schneewind O."/>
            <person name="Takeuchi F."/>
            <person name="Hiramatsu K."/>
        </authorList>
    </citation>
    <scope>NUCLEOTIDE SEQUENCE [LARGE SCALE GENOMIC DNA]</scope>
    <source>
        <strain>Newman</strain>
    </source>
</reference>
<sequence>MKTMKKYIKTAFFCSMYWLIVQLNIANLGTRIPDKYFRQKYIIFKSFNFEKHGKFWNKWFYVRKWKHKILDGHQLNQNIYDQRHLMTINTDEIEKMIIETKRAELIHWISILPVIIFNKGPRLVKYINIFYAMIANVPIIIVQRYNRPRLTQLLRILKRKGERHD</sequence>